<gene>
    <name evidence="1" type="primary">mnmA</name>
    <name type="ordered locus">Bpro_4559</name>
</gene>
<dbReference type="EC" id="2.8.1.13" evidence="1"/>
<dbReference type="EMBL" id="CP000316">
    <property type="protein sequence ID" value="ABE46443.1"/>
    <property type="status" value="ALT_INIT"/>
    <property type="molecule type" value="Genomic_DNA"/>
</dbReference>
<dbReference type="RefSeq" id="WP_041389029.1">
    <property type="nucleotide sequence ID" value="NC_007948.1"/>
</dbReference>
<dbReference type="SMR" id="Q122U9"/>
<dbReference type="STRING" id="296591.Bpro_4559"/>
<dbReference type="KEGG" id="pol:Bpro_4559"/>
<dbReference type="eggNOG" id="COG0482">
    <property type="taxonomic scope" value="Bacteria"/>
</dbReference>
<dbReference type="HOGENOM" id="CLU_035188_1_0_4"/>
<dbReference type="OrthoDB" id="9800696at2"/>
<dbReference type="Proteomes" id="UP000001983">
    <property type="component" value="Chromosome"/>
</dbReference>
<dbReference type="GO" id="GO:0005737">
    <property type="term" value="C:cytoplasm"/>
    <property type="evidence" value="ECO:0007669"/>
    <property type="project" value="UniProtKB-SubCell"/>
</dbReference>
<dbReference type="GO" id="GO:0005524">
    <property type="term" value="F:ATP binding"/>
    <property type="evidence" value="ECO:0007669"/>
    <property type="project" value="UniProtKB-KW"/>
</dbReference>
<dbReference type="GO" id="GO:0000049">
    <property type="term" value="F:tRNA binding"/>
    <property type="evidence" value="ECO:0007669"/>
    <property type="project" value="UniProtKB-KW"/>
</dbReference>
<dbReference type="GO" id="GO:0103016">
    <property type="term" value="F:tRNA-uridine 2-sulfurtransferase activity"/>
    <property type="evidence" value="ECO:0007669"/>
    <property type="project" value="UniProtKB-EC"/>
</dbReference>
<dbReference type="GO" id="GO:0002143">
    <property type="term" value="P:tRNA wobble position uridine thiolation"/>
    <property type="evidence" value="ECO:0007669"/>
    <property type="project" value="TreeGrafter"/>
</dbReference>
<dbReference type="CDD" id="cd01998">
    <property type="entry name" value="MnmA_TRMU-like"/>
    <property type="match status" value="1"/>
</dbReference>
<dbReference type="FunFam" id="2.40.30.10:FF:000023">
    <property type="entry name" value="tRNA-specific 2-thiouridylase MnmA"/>
    <property type="match status" value="1"/>
</dbReference>
<dbReference type="FunFam" id="3.40.50.620:FF:000004">
    <property type="entry name" value="tRNA-specific 2-thiouridylase MnmA"/>
    <property type="match status" value="1"/>
</dbReference>
<dbReference type="Gene3D" id="2.30.30.280">
    <property type="entry name" value="Adenine nucleotide alpha hydrolases-like domains"/>
    <property type="match status" value="1"/>
</dbReference>
<dbReference type="Gene3D" id="3.40.50.620">
    <property type="entry name" value="HUPs"/>
    <property type="match status" value="1"/>
</dbReference>
<dbReference type="Gene3D" id="2.40.30.10">
    <property type="entry name" value="Translation factors"/>
    <property type="match status" value="1"/>
</dbReference>
<dbReference type="HAMAP" id="MF_00144">
    <property type="entry name" value="tRNA_thiouridyl_MnmA"/>
    <property type="match status" value="1"/>
</dbReference>
<dbReference type="InterPro" id="IPR004506">
    <property type="entry name" value="MnmA-like"/>
</dbReference>
<dbReference type="InterPro" id="IPR046885">
    <property type="entry name" value="MnmA-like_C"/>
</dbReference>
<dbReference type="InterPro" id="IPR046884">
    <property type="entry name" value="MnmA-like_central"/>
</dbReference>
<dbReference type="InterPro" id="IPR023382">
    <property type="entry name" value="MnmA-like_central_sf"/>
</dbReference>
<dbReference type="InterPro" id="IPR014729">
    <property type="entry name" value="Rossmann-like_a/b/a_fold"/>
</dbReference>
<dbReference type="NCBIfam" id="NF001138">
    <property type="entry name" value="PRK00143.1"/>
    <property type="match status" value="1"/>
</dbReference>
<dbReference type="NCBIfam" id="TIGR00420">
    <property type="entry name" value="trmU"/>
    <property type="match status" value="1"/>
</dbReference>
<dbReference type="PANTHER" id="PTHR11933:SF5">
    <property type="entry name" value="MITOCHONDRIAL TRNA-SPECIFIC 2-THIOURIDYLASE 1"/>
    <property type="match status" value="1"/>
</dbReference>
<dbReference type="PANTHER" id="PTHR11933">
    <property type="entry name" value="TRNA 5-METHYLAMINOMETHYL-2-THIOURIDYLATE -METHYLTRANSFERASE"/>
    <property type="match status" value="1"/>
</dbReference>
<dbReference type="Pfam" id="PF03054">
    <property type="entry name" value="tRNA_Me_trans"/>
    <property type="match status" value="1"/>
</dbReference>
<dbReference type="Pfam" id="PF20258">
    <property type="entry name" value="tRNA_Me_trans_C"/>
    <property type="match status" value="1"/>
</dbReference>
<dbReference type="Pfam" id="PF20259">
    <property type="entry name" value="tRNA_Me_trans_M"/>
    <property type="match status" value="1"/>
</dbReference>
<dbReference type="SUPFAM" id="SSF52402">
    <property type="entry name" value="Adenine nucleotide alpha hydrolases-like"/>
    <property type="match status" value="1"/>
</dbReference>
<organism>
    <name type="scientific">Polaromonas sp. (strain JS666 / ATCC BAA-500)</name>
    <dbReference type="NCBI Taxonomy" id="296591"/>
    <lineage>
        <taxon>Bacteria</taxon>
        <taxon>Pseudomonadati</taxon>
        <taxon>Pseudomonadota</taxon>
        <taxon>Betaproteobacteria</taxon>
        <taxon>Burkholderiales</taxon>
        <taxon>Comamonadaceae</taxon>
        <taxon>Polaromonas</taxon>
    </lineage>
</organism>
<keyword id="KW-0067">ATP-binding</keyword>
<keyword id="KW-0963">Cytoplasm</keyword>
<keyword id="KW-1015">Disulfide bond</keyword>
<keyword id="KW-0547">Nucleotide-binding</keyword>
<keyword id="KW-1185">Reference proteome</keyword>
<keyword id="KW-0694">RNA-binding</keyword>
<keyword id="KW-0808">Transferase</keyword>
<keyword id="KW-0819">tRNA processing</keyword>
<keyword id="KW-0820">tRNA-binding</keyword>
<reference key="1">
    <citation type="journal article" date="2008" name="Appl. Environ. Microbiol.">
        <title>The genome of Polaromonas sp. strain JS666: insights into the evolution of a hydrocarbon- and xenobiotic-degrading bacterium, and features of relevance to biotechnology.</title>
        <authorList>
            <person name="Mattes T.E."/>
            <person name="Alexander A.K."/>
            <person name="Richardson P.M."/>
            <person name="Munk A.C."/>
            <person name="Han C.S."/>
            <person name="Stothard P."/>
            <person name="Coleman N.V."/>
        </authorList>
    </citation>
    <scope>NUCLEOTIDE SEQUENCE [LARGE SCALE GENOMIC DNA]</scope>
    <source>
        <strain>JS666 / ATCC BAA-500</strain>
    </source>
</reference>
<proteinExistence type="inferred from homology"/>
<feature type="chain" id="PRO_0000349739" description="tRNA-specific 2-thiouridylase MnmA">
    <location>
        <begin position="1"/>
        <end position="401"/>
    </location>
</feature>
<feature type="region of interest" description="Interaction with target base in tRNA" evidence="1">
    <location>
        <begin position="99"/>
        <end position="101"/>
    </location>
</feature>
<feature type="region of interest" description="Interaction with tRNA" evidence="1">
    <location>
        <begin position="152"/>
        <end position="154"/>
    </location>
</feature>
<feature type="region of interest" description="Interaction with tRNA" evidence="1">
    <location>
        <begin position="329"/>
        <end position="330"/>
    </location>
</feature>
<feature type="active site" description="Nucleophile" evidence="1">
    <location>
        <position position="104"/>
    </location>
</feature>
<feature type="active site" description="Cysteine persulfide intermediate" evidence="1">
    <location>
        <position position="202"/>
    </location>
</feature>
<feature type="binding site" evidence="1">
    <location>
        <begin position="13"/>
        <end position="20"/>
    </location>
    <ligand>
        <name>ATP</name>
        <dbReference type="ChEBI" id="CHEBI:30616"/>
    </ligand>
</feature>
<feature type="binding site" evidence="1">
    <location>
        <position position="39"/>
    </location>
    <ligand>
        <name>ATP</name>
        <dbReference type="ChEBI" id="CHEBI:30616"/>
    </ligand>
</feature>
<feature type="binding site" evidence="1">
    <location>
        <position position="128"/>
    </location>
    <ligand>
        <name>ATP</name>
        <dbReference type="ChEBI" id="CHEBI:30616"/>
    </ligand>
</feature>
<feature type="site" description="Interaction with tRNA" evidence="1">
    <location>
        <position position="129"/>
    </location>
</feature>
<feature type="site" description="Interaction with tRNA" evidence="1">
    <location>
        <position position="362"/>
    </location>
</feature>
<feature type="disulfide bond" description="Alternate" evidence="1">
    <location>
        <begin position="104"/>
        <end position="202"/>
    </location>
</feature>
<accession>Q122U9</accession>
<name>MNMA_POLSJ</name>
<evidence type="ECO:0000255" key="1">
    <source>
        <dbReference type="HAMAP-Rule" id="MF_00144"/>
    </source>
</evidence>
<evidence type="ECO:0000305" key="2"/>
<comment type="function">
    <text evidence="1">Catalyzes the 2-thiolation of uridine at the wobble position (U34) of tRNA, leading to the formation of s(2)U34.</text>
</comment>
<comment type="catalytic activity">
    <reaction evidence="1">
        <text>S-sulfanyl-L-cysteinyl-[protein] + uridine(34) in tRNA + AH2 + ATP = 2-thiouridine(34) in tRNA + L-cysteinyl-[protein] + A + AMP + diphosphate + H(+)</text>
        <dbReference type="Rhea" id="RHEA:47032"/>
        <dbReference type="Rhea" id="RHEA-COMP:10131"/>
        <dbReference type="Rhea" id="RHEA-COMP:11726"/>
        <dbReference type="Rhea" id="RHEA-COMP:11727"/>
        <dbReference type="Rhea" id="RHEA-COMP:11728"/>
        <dbReference type="ChEBI" id="CHEBI:13193"/>
        <dbReference type="ChEBI" id="CHEBI:15378"/>
        <dbReference type="ChEBI" id="CHEBI:17499"/>
        <dbReference type="ChEBI" id="CHEBI:29950"/>
        <dbReference type="ChEBI" id="CHEBI:30616"/>
        <dbReference type="ChEBI" id="CHEBI:33019"/>
        <dbReference type="ChEBI" id="CHEBI:61963"/>
        <dbReference type="ChEBI" id="CHEBI:65315"/>
        <dbReference type="ChEBI" id="CHEBI:87170"/>
        <dbReference type="ChEBI" id="CHEBI:456215"/>
        <dbReference type="EC" id="2.8.1.13"/>
    </reaction>
</comment>
<comment type="subcellular location">
    <subcellularLocation>
        <location evidence="1">Cytoplasm</location>
    </subcellularLocation>
</comment>
<comment type="similarity">
    <text evidence="1">Belongs to the MnmA/TRMU family.</text>
</comment>
<comment type="sequence caution" evidence="2">
    <conflict type="erroneous initiation">
        <sequence resource="EMBL-CDS" id="ABE46443"/>
    </conflict>
</comment>
<protein>
    <recommendedName>
        <fullName evidence="1">tRNA-specific 2-thiouridylase MnmA</fullName>
        <ecNumber evidence="1">2.8.1.13</ecNumber>
    </recommendedName>
</protein>
<sequence>MDKQHSKQRIVVGLSGGVDSAVTAYLLKQQGHEVIGIFMKNWEDDDDSEYCSSNIDFVDAAAVADVIGIEIEHVNFAADYKDRVFAEFLREYQAGRTPNPDILCNAEIKFKAFLDHAMRLGAEKIATGHYARVRRNESTGLHELLKGLDPAKDQSYFLHRLNQAQLSKTLFPVGELHKTEVRRIADEIGLPNAKKKDSTGICFIGERPFRDFLNRYIAKAPGPIKNDRGRVLGKHVGLSFYTLGQRQGLGIGGVKARGAELKAAQARGQRGVGEHEPWFVARKDLDTNTLWVVQGHDHPWLQSTVLSAQDCSWVAGTAPAAGLMAAKTRYRQVDATCELRSATTANCELVFAEPQWAVTPGQSAVLYQGDVCLGGGVIAASNVPNTLPTVSTRSTPELLVK</sequence>